<gene>
    <name type="primary">nat</name>
    <name type="ordered locus">BQ2027_MB3596C</name>
</gene>
<dbReference type="EC" id="2.3.1.5" evidence="2"/>
<dbReference type="EMBL" id="LT708304">
    <property type="protein sequence ID" value="SIU02223.1"/>
    <property type="molecule type" value="Genomic_DNA"/>
</dbReference>
<dbReference type="RefSeq" id="NP_857235.1">
    <property type="nucleotide sequence ID" value="NC_002945.3"/>
</dbReference>
<dbReference type="RefSeq" id="WP_003419364.1">
    <property type="nucleotide sequence ID" value="NC_002945.4"/>
</dbReference>
<dbReference type="SMR" id="P0A5L9"/>
<dbReference type="KEGG" id="mbo:BQ2027_MB3596C"/>
<dbReference type="PATRIC" id="fig|233413.5.peg.3939"/>
<dbReference type="Proteomes" id="UP000001419">
    <property type="component" value="Chromosome"/>
</dbReference>
<dbReference type="GO" id="GO:0004060">
    <property type="term" value="F:arylamine N-acetyltransferase activity"/>
    <property type="evidence" value="ECO:0007669"/>
    <property type="project" value="UniProtKB-EC"/>
</dbReference>
<dbReference type="Gene3D" id="3.30.2140.10">
    <property type="entry name" value="Arylamine N-acetyltransferase"/>
    <property type="match status" value="1"/>
</dbReference>
<dbReference type="Gene3D" id="2.40.128.150">
    <property type="entry name" value="Cysteine proteinases"/>
    <property type="match status" value="1"/>
</dbReference>
<dbReference type="InterPro" id="IPR001447">
    <property type="entry name" value="Arylamine_N-AcTrfase"/>
</dbReference>
<dbReference type="InterPro" id="IPR038765">
    <property type="entry name" value="Papain-like_cys_pep_sf"/>
</dbReference>
<dbReference type="PANTHER" id="PTHR11786:SF0">
    <property type="entry name" value="ARYLAMINE N-ACETYLTRANSFERASE 4-RELATED"/>
    <property type="match status" value="1"/>
</dbReference>
<dbReference type="PANTHER" id="PTHR11786">
    <property type="entry name" value="N-HYDROXYARYLAMINE O-ACETYLTRANSFERASE"/>
    <property type="match status" value="1"/>
</dbReference>
<dbReference type="Pfam" id="PF00797">
    <property type="entry name" value="Acetyltransf_2"/>
    <property type="match status" value="1"/>
</dbReference>
<dbReference type="SUPFAM" id="SSF54001">
    <property type="entry name" value="Cysteine proteinases"/>
    <property type="match status" value="1"/>
</dbReference>
<sequence length="283" mass="31029">MALDLTAYFDRINYRGATDPTLDVLQDLVTVHSRTIPFENLDPLLGVPVDDLSPQALADKLVLRRRGGYCFEHNGLMGYVLAELGYRVRRFAARVVWKLAPDAPLPPQTHTLLGVTFPGSGGCYLVDVGFGGQTPTSPLRLETGAVQPTTHEPYRLEDRVDGFVLQAMVRDTWQTLYEFTTQTRPQIDLKVASWYASTHPASKFVTGLTAAVITDDARWNLSGRDLAVHRAGGTEKIRLADAAAVVDTLSERFGINVADIGERGALETRIDELLARQPGADAP</sequence>
<evidence type="ECO:0000250" key="1">
    <source>
        <dbReference type="UniProtKB" id="O86309"/>
    </source>
</evidence>
<evidence type="ECO:0000250" key="2">
    <source>
        <dbReference type="UniProtKB" id="P9WJI5"/>
    </source>
</evidence>
<evidence type="ECO:0000305" key="3"/>
<feature type="chain" id="PRO_0000107917" description="Arylamine N-acetyltransferase">
    <location>
        <begin position="1"/>
        <end position="283"/>
    </location>
</feature>
<feature type="active site" description="Acyl-thioester intermediate" evidence="2">
    <location>
        <position position="70"/>
    </location>
</feature>
<feature type="active site" evidence="2">
    <location>
        <position position="110"/>
    </location>
</feature>
<feature type="active site" evidence="2">
    <location>
        <position position="127"/>
    </location>
</feature>
<proteinExistence type="inferred from homology"/>
<reference key="1">
    <citation type="journal article" date="2003" name="Proc. Natl. Acad. Sci. U.S.A.">
        <title>The complete genome sequence of Mycobacterium bovis.</title>
        <authorList>
            <person name="Garnier T."/>
            <person name="Eiglmeier K."/>
            <person name="Camus J.-C."/>
            <person name="Medina N."/>
            <person name="Mansoor H."/>
            <person name="Pryor M."/>
            <person name="Duthoy S."/>
            <person name="Grondin S."/>
            <person name="Lacroix C."/>
            <person name="Monsempe C."/>
            <person name="Simon S."/>
            <person name="Harris B."/>
            <person name="Atkin R."/>
            <person name="Doggett J."/>
            <person name="Mayes R."/>
            <person name="Keating L."/>
            <person name="Wheeler P.R."/>
            <person name="Parkhill J."/>
            <person name="Barrell B.G."/>
            <person name="Cole S.T."/>
            <person name="Gordon S.V."/>
            <person name="Hewinson R.G."/>
        </authorList>
    </citation>
    <scope>NUCLEOTIDE SEQUENCE [LARGE SCALE GENOMIC DNA]</scope>
    <source>
        <strain>ATCC BAA-935 / AF2122/97</strain>
    </source>
</reference>
<reference key="2">
    <citation type="journal article" date="2017" name="Genome Announc.">
        <title>Updated reference genome sequence and annotation of Mycobacterium bovis AF2122/97.</title>
        <authorList>
            <person name="Malone K.M."/>
            <person name="Farrell D."/>
            <person name="Stuber T.P."/>
            <person name="Schubert O.T."/>
            <person name="Aebersold R."/>
            <person name="Robbe-Austerman S."/>
            <person name="Gordon S.V."/>
        </authorList>
    </citation>
    <scope>NUCLEOTIDE SEQUENCE [LARGE SCALE GENOMIC DNA]</scope>
    <scope>GENOME REANNOTATION</scope>
    <source>
        <strain>ATCC BAA-935 / AF2122/97</strain>
    </source>
</reference>
<accession>P0A5L9</accession>
<accession>A0A1R3Y4H0</accession>
<accession>P96848</accession>
<accession>X2BPU6</accession>
<protein>
    <recommendedName>
        <fullName>Arylamine N-acetyltransferase</fullName>
        <shortName>NAT</shortName>
        <ecNumber evidence="2">2.3.1.5</ecNumber>
    </recommendedName>
</protein>
<keyword id="KW-0012">Acyltransferase</keyword>
<keyword id="KW-1185">Reference proteome</keyword>
<keyword id="KW-0808">Transferase</keyword>
<organism>
    <name type="scientific">Mycobacterium bovis (strain ATCC BAA-935 / AF2122/97)</name>
    <dbReference type="NCBI Taxonomy" id="233413"/>
    <lineage>
        <taxon>Bacteria</taxon>
        <taxon>Bacillati</taxon>
        <taxon>Actinomycetota</taxon>
        <taxon>Actinomycetes</taxon>
        <taxon>Mycobacteriales</taxon>
        <taxon>Mycobacteriaceae</taxon>
        <taxon>Mycobacterium</taxon>
        <taxon>Mycobacterium tuberculosis complex</taxon>
    </lineage>
</organism>
<name>NAT_MYCBO</name>
<comment type="function">
    <text evidence="2">Catalyzes the transfer of the acetyl group from acetyl coenzyme A to the free amino group of arylamines and hydrazines. Is able to utilize not only acetyl-CoA, but also n-propionyl-CoA and acetoacetyl-CoA as acyl donors, although at a lower rate. As acetyl-CoA and propionyl-CoA are products of cholesterol catabolism and the nat gene is likely present in the same operon than genes involved in cholesterol degradation, this enzyme could have a role in the utilization and regulation of these CoA species.</text>
</comment>
<comment type="catalytic activity">
    <reaction evidence="2">
        <text>an arylamine + acetyl-CoA = an N-acetylarylamine + CoA</text>
        <dbReference type="Rhea" id="RHEA:16613"/>
        <dbReference type="ChEBI" id="CHEBI:13790"/>
        <dbReference type="ChEBI" id="CHEBI:50471"/>
        <dbReference type="ChEBI" id="CHEBI:57287"/>
        <dbReference type="ChEBI" id="CHEBI:57288"/>
        <dbReference type="EC" id="2.3.1.5"/>
    </reaction>
</comment>
<comment type="subunit">
    <text evidence="1">Homodimer and homotetramer.</text>
</comment>
<comment type="similarity">
    <text evidence="3">Belongs to the arylamine N-acetyltransferase family.</text>
</comment>